<protein>
    <recommendedName>
        <fullName>ATP-dependent RNA helicase DRS1</fullName>
        <ecNumber>3.6.4.13</ecNumber>
    </recommendedName>
</protein>
<sequence>MPDFILTIDSDEEVDVSDSEQLQDINPDFKFQIDGETTNTLEEFDFQENKVKEVDLDEIIKKKGGLKEESDDEELALDGFGMGASKQEEEEEEEEEEVEVPEVKEVVEPEDSAEAIADFYEESSPQQTHTSFQTLQLSRPVLKGIAELKFTKPTPIQSASIPIALLGKDIVAGAQTGSGKTGAYMIPIIERLLYKPSTSTKVIILTPTRELALQVYEFGKKLSHHVNNLNIGLAVGGLNLRQQEEQLKTRPDIVIATPGRLIDHIRNSPSFSVQDIQVLVIDEADRMLEEGFQDELTEILSLIPKHKRQTLLFSATMNTRIQDLIQLSLQKPVRIMIDPPKSVASKLLQQFVRIRKRDQLKPALLYQLLKGVSSRVVVFVARKETAHRLRIVLGLLGLKVSELHGALTQEQRLQNVKNFKSLEVPVLICTDLAARGLDIPKIELVINYDMPKTFEIYLHRVGRTARAGRDGTSITFVGESSQERAIVKSAIVNGKGVAKTVDWKQAEETNKLLESKESVIDEVLEEEKEAKELLRAEMELTKASNLIKHEQEIHSRPKRTWFKGEVMEQLTKHGKKVNSKKRKANEVRKDEGRSYKKTKTDRMKISNKKKSKK</sequence>
<feature type="chain" id="PRO_0000232242" description="ATP-dependent RNA helicase DRS1">
    <location>
        <begin position="1"/>
        <end position="613"/>
    </location>
</feature>
<feature type="domain" description="Helicase ATP-binding" evidence="3">
    <location>
        <begin position="161"/>
        <end position="335"/>
    </location>
</feature>
<feature type="domain" description="Helicase C-terminal" evidence="4">
    <location>
        <begin position="364"/>
        <end position="541"/>
    </location>
</feature>
<feature type="region of interest" description="Disordered" evidence="5">
    <location>
        <begin position="1"/>
        <end position="20"/>
    </location>
</feature>
<feature type="region of interest" description="Disordered" evidence="5">
    <location>
        <begin position="79"/>
        <end position="104"/>
    </location>
</feature>
<feature type="region of interest" description="Disordered" evidence="5">
    <location>
        <begin position="571"/>
        <end position="613"/>
    </location>
</feature>
<feature type="coiled-coil region" evidence="2">
    <location>
        <begin position="504"/>
        <end position="552"/>
    </location>
</feature>
<feature type="short sequence motif" description="Q motif">
    <location>
        <begin position="130"/>
        <end position="158"/>
    </location>
</feature>
<feature type="short sequence motif" description="DEAD box">
    <location>
        <begin position="282"/>
        <end position="285"/>
    </location>
</feature>
<feature type="compositionally biased region" description="Acidic residues" evidence="5">
    <location>
        <begin position="9"/>
        <end position="18"/>
    </location>
</feature>
<feature type="compositionally biased region" description="Acidic residues" evidence="5">
    <location>
        <begin position="88"/>
        <end position="100"/>
    </location>
</feature>
<feature type="compositionally biased region" description="Basic residues" evidence="5">
    <location>
        <begin position="572"/>
        <end position="583"/>
    </location>
</feature>
<feature type="compositionally biased region" description="Basic and acidic residues" evidence="5">
    <location>
        <begin position="584"/>
        <end position="604"/>
    </location>
</feature>
<feature type="binding site" evidence="3">
    <location>
        <begin position="174"/>
        <end position="181"/>
    </location>
    <ligand>
        <name>ATP</name>
        <dbReference type="ChEBI" id="CHEBI:30616"/>
    </ligand>
</feature>
<dbReference type="EC" id="3.6.4.13"/>
<dbReference type="EMBL" id="CP017630">
    <property type="protein sequence ID" value="AOW31704.1"/>
    <property type="molecule type" value="Genomic_DNA"/>
</dbReference>
<dbReference type="RefSeq" id="XP_719395.1">
    <property type="nucleotide sequence ID" value="XM_714302.1"/>
</dbReference>
<dbReference type="SMR" id="Q5ACK7"/>
<dbReference type="FunCoup" id="Q5ACK7">
    <property type="interactions" value="963"/>
</dbReference>
<dbReference type="STRING" id="237561.Q5ACK7"/>
<dbReference type="EnsemblFungi" id="CR_10550W_A-T">
    <property type="protein sequence ID" value="CR_10550W_A-T-p1"/>
    <property type="gene ID" value="CR_10550W_A"/>
</dbReference>
<dbReference type="GeneID" id="3639045"/>
<dbReference type="KEGG" id="cal:CAALFM_CR10550WA"/>
<dbReference type="CGD" id="CAL0000182242">
    <property type="gene designation" value="DRS1"/>
</dbReference>
<dbReference type="VEuPathDB" id="FungiDB:CR_10550W_A"/>
<dbReference type="eggNOG" id="KOG0338">
    <property type="taxonomic scope" value="Eukaryota"/>
</dbReference>
<dbReference type="HOGENOM" id="CLU_003041_3_2_1"/>
<dbReference type="InParanoid" id="Q5ACK7"/>
<dbReference type="OMA" id="MIDPPKQ"/>
<dbReference type="OrthoDB" id="10259843at2759"/>
<dbReference type="Proteomes" id="UP000000559">
    <property type="component" value="Chromosome R"/>
</dbReference>
<dbReference type="GO" id="GO:0005730">
    <property type="term" value="C:nucleolus"/>
    <property type="evidence" value="ECO:0000318"/>
    <property type="project" value="GO_Central"/>
</dbReference>
<dbReference type="GO" id="GO:0030687">
    <property type="term" value="C:preribosome, large subunit precursor"/>
    <property type="evidence" value="ECO:0007669"/>
    <property type="project" value="EnsemblFungi"/>
</dbReference>
<dbReference type="GO" id="GO:0005524">
    <property type="term" value="F:ATP binding"/>
    <property type="evidence" value="ECO:0007669"/>
    <property type="project" value="UniProtKB-KW"/>
</dbReference>
<dbReference type="GO" id="GO:0016887">
    <property type="term" value="F:ATP hydrolysis activity"/>
    <property type="evidence" value="ECO:0007669"/>
    <property type="project" value="RHEA"/>
</dbReference>
<dbReference type="GO" id="GO:0003723">
    <property type="term" value="F:RNA binding"/>
    <property type="evidence" value="ECO:0007669"/>
    <property type="project" value="UniProtKB-KW"/>
</dbReference>
<dbReference type="GO" id="GO:0003724">
    <property type="term" value="F:RNA helicase activity"/>
    <property type="evidence" value="ECO:0007669"/>
    <property type="project" value="UniProtKB-EC"/>
</dbReference>
<dbReference type="GO" id="GO:0000027">
    <property type="term" value="P:ribosomal large subunit assembly"/>
    <property type="evidence" value="ECO:0007669"/>
    <property type="project" value="EnsemblFungi"/>
</dbReference>
<dbReference type="GO" id="GO:0006364">
    <property type="term" value="P:rRNA processing"/>
    <property type="evidence" value="ECO:0007669"/>
    <property type="project" value="EnsemblFungi"/>
</dbReference>
<dbReference type="CDD" id="cd17947">
    <property type="entry name" value="DEADc_DDX27"/>
    <property type="match status" value="1"/>
</dbReference>
<dbReference type="CDD" id="cd18787">
    <property type="entry name" value="SF2_C_DEAD"/>
    <property type="match status" value="1"/>
</dbReference>
<dbReference type="FunFam" id="3.40.50.300:FF:000842">
    <property type="entry name" value="ATP-dependent RNA helicase DRS1"/>
    <property type="match status" value="1"/>
</dbReference>
<dbReference type="FunFam" id="3.40.50.300:FF:004028">
    <property type="entry name" value="ATP-dependent RNA helicase DRS1"/>
    <property type="match status" value="1"/>
</dbReference>
<dbReference type="Gene3D" id="3.40.50.300">
    <property type="entry name" value="P-loop containing nucleotide triphosphate hydrolases"/>
    <property type="match status" value="2"/>
</dbReference>
<dbReference type="InterPro" id="IPR011545">
    <property type="entry name" value="DEAD/DEAH_box_helicase_dom"/>
</dbReference>
<dbReference type="InterPro" id="IPR050079">
    <property type="entry name" value="DEAD_box_RNA_helicase"/>
</dbReference>
<dbReference type="InterPro" id="IPR014001">
    <property type="entry name" value="Helicase_ATP-bd"/>
</dbReference>
<dbReference type="InterPro" id="IPR001650">
    <property type="entry name" value="Helicase_C-like"/>
</dbReference>
<dbReference type="InterPro" id="IPR027417">
    <property type="entry name" value="P-loop_NTPase"/>
</dbReference>
<dbReference type="InterPro" id="IPR000629">
    <property type="entry name" value="RNA-helicase_DEAD-box_CS"/>
</dbReference>
<dbReference type="InterPro" id="IPR014014">
    <property type="entry name" value="RNA_helicase_DEAD_Q_motif"/>
</dbReference>
<dbReference type="PANTHER" id="PTHR47959:SF1">
    <property type="entry name" value="ATP-DEPENDENT RNA HELICASE DBPA"/>
    <property type="match status" value="1"/>
</dbReference>
<dbReference type="PANTHER" id="PTHR47959">
    <property type="entry name" value="ATP-DEPENDENT RNA HELICASE RHLE-RELATED"/>
    <property type="match status" value="1"/>
</dbReference>
<dbReference type="Pfam" id="PF00270">
    <property type="entry name" value="DEAD"/>
    <property type="match status" value="1"/>
</dbReference>
<dbReference type="Pfam" id="PF00271">
    <property type="entry name" value="Helicase_C"/>
    <property type="match status" value="1"/>
</dbReference>
<dbReference type="SMART" id="SM00487">
    <property type="entry name" value="DEXDc"/>
    <property type="match status" value="1"/>
</dbReference>
<dbReference type="SMART" id="SM00490">
    <property type="entry name" value="HELICc"/>
    <property type="match status" value="1"/>
</dbReference>
<dbReference type="SUPFAM" id="SSF52540">
    <property type="entry name" value="P-loop containing nucleoside triphosphate hydrolases"/>
    <property type="match status" value="2"/>
</dbReference>
<dbReference type="PROSITE" id="PS00039">
    <property type="entry name" value="DEAD_ATP_HELICASE"/>
    <property type="match status" value="1"/>
</dbReference>
<dbReference type="PROSITE" id="PS51192">
    <property type="entry name" value="HELICASE_ATP_BIND_1"/>
    <property type="match status" value="1"/>
</dbReference>
<dbReference type="PROSITE" id="PS51194">
    <property type="entry name" value="HELICASE_CTER"/>
    <property type="match status" value="1"/>
</dbReference>
<dbReference type="PROSITE" id="PS51195">
    <property type="entry name" value="Q_MOTIF"/>
    <property type="match status" value="1"/>
</dbReference>
<organism>
    <name type="scientific">Candida albicans (strain SC5314 / ATCC MYA-2876)</name>
    <name type="common">Yeast</name>
    <dbReference type="NCBI Taxonomy" id="237561"/>
    <lineage>
        <taxon>Eukaryota</taxon>
        <taxon>Fungi</taxon>
        <taxon>Dikarya</taxon>
        <taxon>Ascomycota</taxon>
        <taxon>Saccharomycotina</taxon>
        <taxon>Pichiomycetes</taxon>
        <taxon>Debaryomycetaceae</taxon>
        <taxon>Candida/Lodderomyces clade</taxon>
        <taxon>Candida</taxon>
    </lineage>
</organism>
<proteinExistence type="inferred from homology"/>
<evidence type="ECO:0000250" key="1"/>
<evidence type="ECO:0000255" key="2"/>
<evidence type="ECO:0000255" key="3">
    <source>
        <dbReference type="PROSITE-ProRule" id="PRU00541"/>
    </source>
</evidence>
<evidence type="ECO:0000255" key="4">
    <source>
        <dbReference type="PROSITE-ProRule" id="PRU00542"/>
    </source>
</evidence>
<evidence type="ECO:0000256" key="5">
    <source>
        <dbReference type="SAM" id="MobiDB-lite"/>
    </source>
</evidence>
<evidence type="ECO:0000305" key="6"/>
<comment type="function">
    <text evidence="1">ATP-binding RNA helicase involved in ribosome assembly.</text>
</comment>
<comment type="catalytic activity">
    <reaction>
        <text>ATP + H2O = ADP + phosphate + H(+)</text>
        <dbReference type="Rhea" id="RHEA:13065"/>
        <dbReference type="ChEBI" id="CHEBI:15377"/>
        <dbReference type="ChEBI" id="CHEBI:15378"/>
        <dbReference type="ChEBI" id="CHEBI:30616"/>
        <dbReference type="ChEBI" id="CHEBI:43474"/>
        <dbReference type="ChEBI" id="CHEBI:456216"/>
        <dbReference type="EC" id="3.6.4.13"/>
    </reaction>
</comment>
<comment type="subunit">
    <text evidence="1">Associates with pre-ribosomal particles.</text>
</comment>
<comment type="subcellular location">
    <subcellularLocation>
        <location evidence="1">Nucleus</location>
        <location evidence="1">Nucleolus</location>
    </subcellularLocation>
</comment>
<comment type="domain">
    <text>The Q motif is unique to and characteristic of the DEAD box family of RNA helicases and controls ATP binding and hydrolysis.</text>
</comment>
<comment type="similarity">
    <text evidence="6">Belongs to the DEAD box helicase family. DDX27/DRS1 subfamily.</text>
</comment>
<accession>Q5ACK7</accession>
<accession>A0A1D8PU89</accession>
<keyword id="KW-0067">ATP-binding</keyword>
<keyword id="KW-0175">Coiled coil</keyword>
<keyword id="KW-0347">Helicase</keyword>
<keyword id="KW-0378">Hydrolase</keyword>
<keyword id="KW-0547">Nucleotide-binding</keyword>
<keyword id="KW-0539">Nucleus</keyword>
<keyword id="KW-1185">Reference proteome</keyword>
<keyword id="KW-0690">Ribosome biogenesis</keyword>
<keyword id="KW-0694">RNA-binding</keyword>
<name>DRS1_CANAL</name>
<reference key="1">
    <citation type="journal article" date="2004" name="Proc. Natl. Acad. Sci. U.S.A.">
        <title>The diploid genome sequence of Candida albicans.</title>
        <authorList>
            <person name="Jones T."/>
            <person name="Federspiel N.A."/>
            <person name="Chibana H."/>
            <person name="Dungan J."/>
            <person name="Kalman S."/>
            <person name="Magee B.B."/>
            <person name="Newport G."/>
            <person name="Thorstenson Y.R."/>
            <person name="Agabian N."/>
            <person name="Magee P.T."/>
            <person name="Davis R.W."/>
            <person name="Scherer S."/>
        </authorList>
    </citation>
    <scope>NUCLEOTIDE SEQUENCE [LARGE SCALE GENOMIC DNA]</scope>
    <source>
        <strain>SC5314 / ATCC MYA-2876</strain>
    </source>
</reference>
<reference key="2">
    <citation type="journal article" date="2007" name="Genome Biol.">
        <title>Assembly of the Candida albicans genome into sixteen supercontigs aligned on the eight chromosomes.</title>
        <authorList>
            <person name="van het Hoog M."/>
            <person name="Rast T.J."/>
            <person name="Martchenko M."/>
            <person name="Grindle S."/>
            <person name="Dignard D."/>
            <person name="Hogues H."/>
            <person name="Cuomo C."/>
            <person name="Berriman M."/>
            <person name="Scherer S."/>
            <person name="Magee B.B."/>
            <person name="Whiteway M."/>
            <person name="Chibana H."/>
            <person name="Nantel A."/>
            <person name="Magee P.T."/>
        </authorList>
    </citation>
    <scope>GENOME REANNOTATION</scope>
    <source>
        <strain>SC5314 / ATCC MYA-2876</strain>
    </source>
</reference>
<reference key="3">
    <citation type="journal article" date="2013" name="Genome Biol.">
        <title>Assembly of a phased diploid Candida albicans genome facilitates allele-specific measurements and provides a simple model for repeat and indel structure.</title>
        <authorList>
            <person name="Muzzey D."/>
            <person name="Schwartz K."/>
            <person name="Weissman J.S."/>
            <person name="Sherlock G."/>
        </authorList>
    </citation>
    <scope>NUCLEOTIDE SEQUENCE [LARGE SCALE GENOMIC DNA]</scope>
    <scope>GENOME REANNOTATION</scope>
    <source>
        <strain>SC5314 / ATCC MYA-2876</strain>
    </source>
</reference>
<gene>
    <name type="primary">DRS1</name>
    <name type="ordered locus">CAALFM_CR10550WA</name>
    <name type="ORF">CaO19.7635</name>
</gene>